<dbReference type="EC" id="3.5.1.56"/>
<dbReference type="EMBL" id="AB028874">
    <property type="protein sequence ID" value="BAA90663.1"/>
    <property type="molecule type" value="Genomic_DNA"/>
</dbReference>
<dbReference type="PIR" id="JC7173">
    <property type="entry name" value="JC7173"/>
</dbReference>
<dbReference type="SMR" id="Q9LCC1"/>
<dbReference type="KEGG" id="ag:BAA90663"/>
<dbReference type="GO" id="GO:0050116">
    <property type="term" value="F:N,N-dimethylformamidase activity"/>
    <property type="evidence" value="ECO:0007669"/>
    <property type="project" value="UniProtKB-EC"/>
</dbReference>
<keyword id="KW-0903">Direct protein sequencing</keyword>
<keyword id="KW-0378">Hydrolase</keyword>
<name>DMFAA_ALCSP</name>
<sequence length="132" mass="16031">MTEASESCVRDPSNYRDRSADWYAFYDERRRKEIIDIIDEHPEIVEEHAANPFGYRKHPSPYLQRVHNYFRMQPTFGKYYIYSEREWDAYRIATIREFGELPELGDERFKTEEEAMHAVFLRRIEDVRAELA</sequence>
<feature type="initiator methionine" description="Removed" evidence="1">
    <location>
        <position position="1"/>
    </location>
</feature>
<feature type="chain" id="PRO_0000403315" description="N,N-dimethylformamidase alpha subunit" evidence="1">
    <location>
        <begin position="2"/>
        <end position="132"/>
    </location>
</feature>
<accession>Q9LCC1</accession>
<proteinExistence type="evidence at protein level"/>
<protein>
    <recommendedName>
        <fullName evidence="3 6">N,N-dimethylformamidase alpha subunit</fullName>
        <ecNumber>3.5.1.56</ecNumber>
    </recommendedName>
    <alternativeName>
        <fullName evidence="4">N,N-dimethylformamidase light chain</fullName>
    </alternativeName>
</protein>
<gene>
    <name evidence="6" type="primary">dmfA1</name>
</gene>
<reference evidence="5 6" key="1">
    <citation type="journal article" date="1999" name="Biosci. Biotechnol. Biochem.">
        <title>Cloning and expression of the N,N-dimethylformamidase gene from Alcaligenes sp. strain KUFA-1.</title>
        <authorList>
            <person name="Hasegawa Y."/>
            <person name="Tokuyama T."/>
            <person name="Iwaki H."/>
        </authorList>
    </citation>
    <scope>NUCLEOTIDE SEQUENCE [GENOMIC DNA]</scope>
    <scope>PROTEIN SEQUENCE OF 2-26</scope>
    <scope>FUNCTION</scope>
    <scope>CATALYTIC ACTIVITY</scope>
    <scope>BIOPHYSICOCHEMICAL PROPERTIES</scope>
    <scope>SUBUNIT</scope>
    <source>
        <strain evidence="6">KUFA-1</strain>
    </source>
</reference>
<reference evidence="5" key="2">
    <citation type="journal article" date="1999" name="J. Ferment. Bioeng.">
        <title>Purification and characterization of N,N-dimethylformamidase from Alcaligenes sp. KUFA-1.</title>
        <authorList>
            <person name="Hasegawa Y."/>
            <person name="Matsuo M."/>
            <person name="Sigemoto Y."/>
            <person name="Sakai T."/>
            <person name="Tokuyama T."/>
        </authorList>
    </citation>
    <scope>FUNCTION</scope>
    <scope>CATALYTIC ACTIVITY</scope>
    <scope>ACTIVITY REGULATION</scope>
    <scope>BIOPHYSICOCHEMICAL PROPERTIES</scope>
    <scope>SUBUNIT</scope>
</reference>
<evidence type="ECO:0000269" key="1">
    <source>
    </source>
</evidence>
<evidence type="ECO:0000269" key="2">
    <source ref="2"/>
</evidence>
<evidence type="ECO:0000303" key="3">
    <source>
    </source>
</evidence>
<evidence type="ECO:0000303" key="4">
    <source ref="2"/>
</evidence>
<evidence type="ECO:0000305" key="5"/>
<evidence type="ECO:0000312" key="6">
    <source>
        <dbReference type="EMBL" id="BAA90663.1"/>
    </source>
</evidence>
<organism>
    <name type="scientific">Alcaligenes sp</name>
    <dbReference type="NCBI Taxonomy" id="512"/>
    <lineage>
        <taxon>Bacteria</taxon>
        <taxon>Pseudomonadati</taxon>
        <taxon>Pseudomonadota</taxon>
        <taxon>Betaproteobacteria</taxon>
        <taxon>Burkholderiales</taxon>
        <taxon>Alcaligenaceae</taxon>
        <taxon>Alcaligenes</taxon>
    </lineage>
</organism>
<comment type="function">
    <text evidence="1 2">Hydrolyzes N,N-dimethylformamide, and to a lesser extent N,N-dimethylacetamide and N,N-diethylacetamide. Has no activity against the substituted amides N-methylformamide, N-ethylformamide, N-ethylformamide and N-methylacetamide or the unsubstituted amides formamide, nicotinamide, acetoamide, benzamide, acetamide and acrylamide.</text>
</comment>
<comment type="catalytic activity">
    <reaction evidence="1 2">
        <text>N,N-dimethylformamide + H2O = dimethylamine + formate</text>
        <dbReference type="Rhea" id="RHEA:19517"/>
        <dbReference type="ChEBI" id="CHEBI:15377"/>
        <dbReference type="ChEBI" id="CHEBI:15740"/>
        <dbReference type="ChEBI" id="CHEBI:17741"/>
        <dbReference type="ChEBI" id="CHEBI:58040"/>
        <dbReference type="EC" id="3.5.1.56"/>
    </reaction>
</comment>
<comment type="activity regulation">
    <text evidence="2">Activity is slightly inhibited by Mg(2+) and Mn(2+), and slightly increased by Cu(2+). Activity is slightly inhibited by the chelating agents 8-hydroxyquinoline, ethylenediaminetetraacetate, o-phenanthroline and 2,2'-bipyridyl.</text>
</comment>
<comment type="biophysicochemical properties">
    <kinetics>
        <KM evidence="1 2">1.28 mM for N,N-dimethylformamide</KM>
        <Vmax evidence="1 2">83.3 umol/min/mg enzyme toward N,N-dimethylformamide</Vmax>
    </kinetics>
    <phDependence>
        <text evidence="1 2">Optimum pH is 6.0-7.0.</text>
    </phDependence>
    <temperatureDependence>
        <text evidence="1 2">Optimum temperature is 50-55 degrees Celsius. Stable up to 50 degrees Celsius, inactivated after incubation at 60 degrees Celsius for 30 minutes. Activity decreases below 50 degrees Celsius, with 20% of activity retained at 25 degrees Celsius.</text>
    </temperatureDependence>
</comment>
<comment type="subunit">
    <text evidence="1 2">Heterotetramer of two DmfA1 (alpha) and two DmfA2 (beta) subunits.</text>
</comment>
<comment type="caution">
    <text evidence="5">It is not known which subunit of DmfA1 or DmfA2 possesses catalytic activity.</text>
</comment>